<sequence>MVSTLDDTKRNAIAEKLADAKLLQELIIENQERFLRESTDNEISNRIRDFLEDDRKNLGIIETVIVQYGIQKEPRQTVREMVDQVRQLMQGSQLNFFEKVAQHELLKHKQVMSGLLVHKAAQKVGADVLAAIGPLNTVNFENRAHQEQLKGILEILGVRELTGQDADQGIWGRVQDAIAAFSGAVGSAVTQGSDKQDMNIQDVIRMDHNKVNILFTELQQSNDPQKIQEYFGQIYKDLTAHAEAEEEVLYPRVRSFYGEGDTQELYDEQSEMKRLLEQIKAISPSAPEFKDRVRQLADIVMDHVRQEESTLFAAIRNNLSSEQTEQWATEFKAAKSKIQQRLGGQATGAGV</sequence>
<proteinExistence type="evidence at protein level"/>
<keyword id="KW-0903">Direct protein sequencing</keyword>
<keyword id="KW-0408">Iron</keyword>
<keyword id="KW-0479">Metal-binding</keyword>
<keyword id="KW-1185">Reference proteome</keyword>
<keyword id="KW-0346">Stress response</keyword>
<evidence type="ECO:0000250" key="1">
    <source>
        <dbReference type="UniProtKB" id="P02244"/>
    </source>
</evidence>
<evidence type="ECO:0000255" key="2"/>
<evidence type="ECO:0000269" key="3">
    <source ref="3"/>
</evidence>
<evidence type="ECO:0000303" key="4">
    <source ref="3"/>
</evidence>
<evidence type="ECO:0000305" key="5"/>
<evidence type="ECO:0000312" key="6">
    <source>
        <dbReference type="EMBL" id="ACL68399.1"/>
    </source>
</evidence>
<evidence type="ECO:0000312" key="7">
    <source>
        <dbReference type="EMBL" id="BAB74898.1"/>
    </source>
</evidence>
<name>NICK_NOSS1</name>
<gene>
    <name type="ordered locus">alr3199</name>
</gene>
<organism>
    <name type="scientific">Nostoc sp. (strain PCC 7120 / SAG 25.82 / UTEX 2576)</name>
    <dbReference type="NCBI Taxonomy" id="103690"/>
    <lineage>
        <taxon>Bacteria</taxon>
        <taxon>Bacillati</taxon>
        <taxon>Cyanobacteriota</taxon>
        <taxon>Cyanophyceae</taxon>
        <taxon>Nostocales</taxon>
        <taxon>Nostocaceae</taxon>
        <taxon>Nostoc</taxon>
    </lineage>
</organism>
<accession>Q8YS92</accession>
<protein>
    <recommendedName>
        <fullName evidence="4">DNA nickase</fullName>
    </recommendedName>
    <alternativeName>
        <fullName evidence="7">Alr3199 protein</fullName>
    </alternativeName>
</protein>
<dbReference type="EMBL" id="FJ543111">
    <property type="protein sequence ID" value="ACL68399.1"/>
    <property type="molecule type" value="Genomic_DNA"/>
</dbReference>
<dbReference type="EMBL" id="BA000019">
    <property type="protein sequence ID" value="BAB74898.1"/>
    <property type="molecule type" value="Genomic_DNA"/>
</dbReference>
<dbReference type="PIR" id="AH2205">
    <property type="entry name" value="AH2205"/>
</dbReference>
<dbReference type="RefSeq" id="WP_010997350.1">
    <property type="nucleotide sequence ID" value="NZ_RSCN01000001.1"/>
</dbReference>
<dbReference type="SMR" id="Q8YS92"/>
<dbReference type="STRING" id="103690.gene:10495236"/>
<dbReference type="KEGG" id="ana:alr3199"/>
<dbReference type="eggNOG" id="COG5592">
    <property type="taxonomic scope" value="Bacteria"/>
</dbReference>
<dbReference type="OrthoDB" id="509872at2"/>
<dbReference type="Proteomes" id="UP000002483">
    <property type="component" value="Chromosome"/>
</dbReference>
<dbReference type="GO" id="GO:0046872">
    <property type="term" value="F:metal ion binding"/>
    <property type="evidence" value="ECO:0007669"/>
    <property type="project" value="UniProtKB-KW"/>
</dbReference>
<dbReference type="CDD" id="cd12108">
    <property type="entry name" value="Hr-like"/>
    <property type="match status" value="1"/>
</dbReference>
<dbReference type="Gene3D" id="1.20.120.520">
    <property type="entry name" value="nmb1532 protein domain like"/>
    <property type="match status" value="1"/>
</dbReference>
<dbReference type="InterPro" id="IPR012312">
    <property type="entry name" value="Hemerythrin-like"/>
</dbReference>
<dbReference type="PANTHER" id="PTHR35585">
    <property type="entry name" value="HHE DOMAIN PROTEIN (AFU_ORTHOLOGUE AFUA_4G00730)"/>
    <property type="match status" value="1"/>
</dbReference>
<dbReference type="PANTHER" id="PTHR35585:SF1">
    <property type="entry name" value="HHE DOMAIN PROTEIN (AFU_ORTHOLOGUE AFUA_4G00730)"/>
    <property type="match status" value="1"/>
</dbReference>
<dbReference type="Pfam" id="PF01814">
    <property type="entry name" value="Hemerythrin"/>
    <property type="match status" value="1"/>
</dbReference>
<reference evidence="5 6" key="1">
    <citation type="submission" date="2008-12" db="EMBL/GenBank/DDBJ databases">
        <title>Cation-dependent differential activities of a novel DNA-interacting protein of Anabaena PCC7120.</title>
        <authorList>
            <person name="Nipanikar P."/>
            <person name="Rajaram H."/>
            <person name="Apte S.K."/>
        </authorList>
    </citation>
    <scope>NUCLEOTIDE SEQUENCE [GENOMIC DNA]</scope>
</reference>
<reference evidence="7" key="2">
    <citation type="journal article" date="2001" name="DNA Res.">
        <title>Complete genomic sequence of the filamentous nitrogen-fixing cyanobacterium Anabaena sp. strain PCC 7120.</title>
        <authorList>
            <person name="Kaneko T."/>
            <person name="Nakamura Y."/>
            <person name="Wolk C.P."/>
            <person name="Kuritz T."/>
            <person name="Sasamoto S."/>
            <person name="Watanabe A."/>
            <person name="Iriguchi M."/>
            <person name="Ishikawa A."/>
            <person name="Kawashima K."/>
            <person name="Kimura T."/>
            <person name="Kishida Y."/>
            <person name="Kohara M."/>
            <person name="Matsumoto M."/>
            <person name="Matsuno A."/>
            <person name="Muraki A."/>
            <person name="Nakazaki N."/>
            <person name="Shimpo S."/>
            <person name="Sugimoto M."/>
            <person name="Takazawa M."/>
            <person name="Yamada M."/>
            <person name="Yasuda M."/>
            <person name="Tabata S."/>
        </authorList>
    </citation>
    <scope>NUCLEOTIDE SEQUENCE [LARGE SCALE GENOMIC DNA]</scope>
    <source>
        <strain>PCC 7120 / SAG 25.82 / UTEX 2576</strain>
    </source>
</reference>
<reference evidence="5 6" key="3">
    <citation type="submission" date="2008-12" db="UniProtKB">
        <title>Desiccation inducible protein of Anabaena 7120.</title>
        <authorList>
            <person name="Gokhale P.N."/>
            <person name="Singh H."/>
            <person name="Rajaram H."/>
            <person name="Apte S.K."/>
        </authorList>
    </citation>
    <scope>PROTEIN SEQUENCE OF 11-16; 100-107 AND 342-351</scope>
    <scope>FUNCTION</scope>
    <scope>INDUCTION</scope>
    <scope>MASS SPECTROMETRY</scope>
</reference>
<feature type="chain" id="PRO_0000395405" description="DNA nickase">
    <location>
        <begin position="1"/>
        <end position="351"/>
    </location>
</feature>
<feature type="binding site" evidence="1">
    <location>
        <position position="241"/>
    </location>
    <ligand>
        <name>Fe cation</name>
        <dbReference type="ChEBI" id="CHEBI:24875"/>
        <label>1</label>
    </ligand>
</feature>
<feature type="binding site" evidence="1">
    <location>
        <position position="245"/>
    </location>
    <ligand>
        <name>Fe cation</name>
        <dbReference type="ChEBI" id="CHEBI:24875"/>
        <label>1</label>
    </ligand>
</feature>
<feature type="binding site" evidence="1">
    <location>
        <position position="245"/>
    </location>
    <ligand>
        <name>Fe cation</name>
        <dbReference type="ChEBI" id="CHEBI:24875"/>
        <label>2</label>
    </ligand>
</feature>
<feature type="binding site" evidence="1">
    <location>
        <position position="303"/>
    </location>
    <ligand>
        <name>Fe cation</name>
        <dbReference type="ChEBI" id="CHEBI:24875"/>
        <label>2</label>
    </ligand>
</feature>
<comment type="function">
    <text evidence="3">Acts as a DNA nickase.</text>
</comment>
<comment type="induction">
    <text evidence="3">By desiccation.</text>
</comment>
<comment type="mass spectrometry"/>
<comment type="similarity">
    <text evidence="2">Belongs to the hemerythrin family.</text>
</comment>